<evidence type="ECO:0000250" key="1"/>
<evidence type="ECO:0000305" key="2"/>
<reference key="1">
    <citation type="journal article" date="1992" name="J. Bacteriol.">
        <title>A general method for cloning recA genes of Gram-positive bacteria by polymerase chain reaction.</title>
        <authorList>
            <person name="Duwat P."/>
            <person name="Ehrlich S.D."/>
            <person name="Gruss A."/>
        </authorList>
    </citation>
    <scope>NUCLEOTIDE SEQUENCE [GENOMIC DNA]</scope>
    <source>
        <strain>IL1250</strain>
    </source>
</reference>
<dbReference type="EMBL" id="M94060">
    <property type="protein sequence ID" value="AAA25266.1"/>
    <property type="molecule type" value="Genomic_DNA"/>
</dbReference>
<dbReference type="PIR" id="D42721">
    <property type="entry name" value="D42721"/>
</dbReference>
<dbReference type="SMR" id="Q02349"/>
<dbReference type="STRING" id="1245.ARA02_02815"/>
<dbReference type="GO" id="GO:0005829">
    <property type="term" value="C:cytosol"/>
    <property type="evidence" value="ECO:0007669"/>
    <property type="project" value="TreeGrafter"/>
</dbReference>
<dbReference type="GO" id="GO:0005524">
    <property type="term" value="F:ATP binding"/>
    <property type="evidence" value="ECO:0007669"/>
    <property type="project" value="UniProtKB-KW"/>
</dbReference>
<dbReference type="GO" id="GO:0140664">
    <property type="term" value="F:ATP-dependent DNA damage sensor activity"/>
    <property type="evidence" value="ECO:0007669"/>
    <property type="project" value="InterPro"/>
</dbReference>
<dbReference type="GO" id="GO:0003697">
    <property type="term" value="F:single-stranded DNA binding"/>
    <property type="evidence" value="ECO:0007669"/>
    <property type="project" value="InterPro"/>
</dbReference>
<dbReference type="GO" id="GO:0006310">
    <property type="term" value="P:DNA recombination"/>
    <property type="evidence" value="ECO:0007669"/>
    <property type="project" value="UniProtKB-KW"/>
</dbReference>
<dbReference type="GO" id="GO:0006281">
    <property type="term" value="P:DNA repair"/>
    <property type="evidence" value="ECO:0007669"/>
    <property type="project" value="UniProtKB-KW"/>
</dbReference>
<dbReference type="GO" id="GO:0009432">
    <property type="term" value="P:SOS response"/>
    <property type="evidence" value="ECO:0007669"/>
    <property type="project" value="UniProtKB-KW"/>
</dbReference>
<dbReference type="Gene3D" id="3.40.50.300">
    <property type="entry name" value="P-loop containing nucleotide triphosphate hydrolases"/>
    <property type="match status" value="1"/>
</dbReference>
<dbReference type="InterPro" id="IPR013765">
    <property type="entry name" value="DNA_recomb/repair_RecA"/>
</dbReference>
<dbReference type="InterPro" id="IPR027417">
    <property type="entry name" value="P-loop_NTPase"/>
</dbReference>
<dbReference type="InterPro" id="IPR049428">
    <property type="entry name" value="RecA-like_N"/>
</dbReference>
<dbReference type="InterPro" id="IPR020588">
    <property type="entry name" value="RecA_ATP-bd"/>
</dbReference>
<dbReference type="PANTHER" id="PTHR45900:SF1">
    <property type="entry name" value="MITOCHONDRIAL DNA REPAIR PROTEIN RECA HOMOLOG-RELATED"/>
    <property type="match status" value="1"/>
</dbReference>
<dbReference type="PANTHER" id="PTHR45900">
    <property type="entry name" value="RECA"/>
    <property type="match status" value="1"/>
</dbReference>
<dbReference type="Pfam" id="PF00154">
    <property type="entry name" value="RecA"/>
    <property type="match status" value="1"/>
</dbReference>
<dbReference type="PRINTS" id="PR00142">
    <property type="entry name" value="RECA"/>
</dbReference>
<dbReference type="SUPFAM" id="SSF52540">
    <property type="entry name" value="P-loop containing nucleoside triphosphate hydrolases"/>
    <property type="match status" value="1"/>
</dbReference>
<dbReference type="PROSITE" id="PS50162">
    <property type="entry name" value="RECA_2"/>
    <property type="match status" value="1"/>
</dbReference>
<protein>
    <recommendedName>
        <fullName>Protein RecA</fullName>
    </recommendedName>
    <alternativeName>
        <fullName>Recombinase A</fullName>
    </alternativeName>
</protein>
<keyword id="KW-0067">ATP-binding</keyword>
<keyword id="KW-0963">Cytoplasm</keyword>
<keyword id="KW-0227">DNA damage</keyword>
<keyword id="KW-0233">DNA recombination</keyword>
<keyword id="KW-0234">DNA repair</keyword>
<keyword id="KW-0238">DNA-binding</keyword>
<keyword id="KW-0547">Nucleotide-binding</keyword>
<keyword id="KW-0742">SOS response</keyword>
<feature type="chain" id="PRO_0000122745" description="Protein RecA">
    <location>
        <begin position="1" status="less than"/>
        <end position="104" status="greater than"/>
    </location>
</feature>
<feature type="non-terminal residue">
    <location>
        <position position="1"/>
    </location>
</feature>
<feature type="non-terminal residue">
    <location>
        <position position="104"/>
    </location>
</feature>
<sequence length="104" mass="11046">KYAEALGVQKDELLLSQPDTGEQGLEIADALVQSGAVDIIVVDSVAALVPRAEIEGEMGDSHVGLQARLMSQALRKLAGTLNRTGTIAIFINQIREKIGVMFGN</sequence>
<proteinExistence type="inferred from homology"/>
<comment type="function">
    <text evidence="1">Can catalyze the hydrolysis of ATP in the presence of single-stranded DNA, the ATP-dependent uptake of single-stranded DNA by duplex DNA, and the ATP-dependent hybridization of homologous single-stranded DNAs. It interacts with LexA causing its activation and leading to its autocatalytic cleavage (By similarity).</text>
</comment>
<comment type="subcellular location">
    <subcellularLocation>
        <location evidence="1">Cytoplasm</location>
    </subcellularLocation>
</comment>
<comment type="similarity">
    <text evidence="2">Belongs to the RecA family.</text>
</comment>
<name>RECA_LEUME</name>
<gene>
    <name type="primary">recA</name>
</gene>
<organism>
    <name type="scientific">Leuconostoc mesenteroides</name>
    <dbReference type="NCBI Taxonomy" id="1245"/>
    <lineage>
        <taxon>Bacteria</taxon>
        <taxon>Bacillati</taxon>
        <taxon>Bacillota</taxon>
        <taxon>Bacilli</taxon>
        <taxon>Lactobacillales</taxon>
        <taxon>Lactobacillaceae</taxon>
        <taxon>Leuconostoc</taxon>
    </lineage>
</organism>
<accession>Q02349</accession>